<keyword id="KW-0007">Acetylation</keyword>
<keyword id="KW-0479">Metal-binding</keyword>
<keyword id="KW-1185">Reference proteome</keyword>
<keyword id="KW-0687">Ribonucleoprotein</keyword>
<keyword id="KW-0689">Ribosomal protein</keyword>
<keyword id="KW-0694">RNA-binding</keyword>
<keyword id="KW-0699">rRNA-binding</keyword>
<keyword id="KW-0862">Zinc</keyword>
<sequence>MKKDIHPKYEEITASCSCGNVMKIRSTVGHDLNLDVCSKCHPFFTGKQRDVATGGRVDRFNKRFNIPGSK</sequence>
<protein>
    <recommendedName>
        <fullName evidence="1">Large ribosomal subunit protein bL31</fullName>
    </recommendedName>
    <alternativeName>
        <fullName evidence="2">50S ribosomal protein L31</fullName>
    </alternativeName>
</protein>
<accession>Q32AA9</accession>
<dbReference type="EMBL" id="CP000034">
    <property type="protein sequence ID" value="ABB63746.1"/>
    <property type="molecule type" value="Genomic_DNA"/>
</dbReference>
<dbReference type="RefSeq" id="WP_000710769.1">
    <property type="nucleotide sequence ID" value="NC_007606.1"/>
</dbReference>
<dbReference type="RefSeq" id="YP_405237.1">
    <property type="nucleotide sequence ID" value="NC_007606.1"/>
</dbReference>
<dbReference type="SMR" id="Q32AA9"/>
<dbReference type="STRING" id="300267.SDY_3801"/>
<dbReference type="EnsemblBacteria" id="ABB63746">
    <property type="protein sequence ID" value="ABB63746"/>
    <property type="gene ID" value="SDY_3801"/>
</dbReference>
<dbReference type="GeneID" id="93777962"/>
<dbReference type="KEGG" id="sdy:SDY_3801"/>
<dbReference type="PATRIC" id="fig|300267.13.peg.4491"/>
<dbReference type="HOGENOM" id="CLU_114306_4_3_6"/>
<dbReference type="Proteomes" id="UP000002716">
    <property type="component" value="Chromosome"/>
</dbReference>
<dbReference type="GO" id="GO:1990904">
    <property type="term" value="C:ribonucleoprotein complex"/>
    <property type="evidence" value="ECO:0007669"/>
    <property type="project" value="UniProtKB-KW"/>
</dbReference>
<dbReference type="GO" id="GO:0005840">
    <property type="term" value="C:ribosome"/>
    <property type="evidence" value="ECO:0007669"/>
    <property type="project" value="UniProtKB-KW"/>
</dbReference>
<dbReference type="GO" id="GO:0046872">
    <property type="term" value="F:metal ion binding"/>
    <property type="evidence" value="ECO:0007669"/>
    <property type="project" value="UniProtKB-KW"/>
</dbReference>
<dbReference type="GO" id="GO:0019843">
    <property type="term" value="F:rRNA binding"/>
    <property type="evidence" value="ECO:0007669"/>
    <property type="project" value="UniProtKB-KW"/>
</dbReference>
<dbReference type="GO" id="GO:0003735">
    <property type="term" value="F:structural constituent of ribosome"/>
    <property type="evidence" value="ECO:0007669"/>
    <property type="project" value="InterPro"/>
</dbReference>
<dbReference type="GO" id="GO:0006412">
    <property type="term" value="P:translation"/>
    <property type="evidence" value="ECO:0007669"/>
    <property type="project" value="UniProtKB-UniRule"/>
</dbReference>
<dbReference type="FunFam" id="4.10.830.30:FF:000001">
    <property type="entry name" value="50S ribosomal protein L31"/>
    <property type="match status" value="1"/>
</dbReference>
<dbReference type="Gene3D" id="4.10.830.30">
    <property type="entry name" value="Ribosomal protein L31"/>
    <property type="match status" value="1"/>
</dbReference>
<dbReference type="HAMAP" id="MF_00501">
    <property type="entry name" value="Ribosomal_bL31_1"/>
    <property type="match status" value="1"/>
</dbReference>
<dbReference type="InterPro" id="IPR034704">
    <property type="entry name" value="Ribosomal_bL28/bL31-like_sf"/>
</dbReference>
<dbReference type="InterPro" id="IPR002150">
    <property type="entry name" value="Ribosomal_bL31"/>
</dbReference>
<dbReference type="InterPro" id="IPR027491">
    <property type="entry name" value="Ribosomal_bL31_A"/>
</dbReference>
<dbReference type="InterPro" id="IPR042105">
    <property type="entry name" value="Ribosomal_bL31_sf"/>
</dbReference>
<dbReference type="NCBIfam" id="TIGR00105">
    <property type="entry name" value="L31"/>
    <property type="match status" value="1"/>
</dbReference>
<dbReference type="NCBIfam" id="NF000612">
    <property type="entry name" value="PRK00019.1"/>
    <property type="match status" value="1"/>
</dbReference>
<dbReference type="NCBIfam" id="NF001809">
    <property type="entry name" value="PRK00528.1"/>
    <property type="match status" value="1"/>
</dbReference>
<dbReference type="PANTHER" id="PTHR33280">
    <property type="entry name" value="50S RIBOSOMAL PROTEIN L31, CHLOROPLASTIC"/>
    <property type="match status" value="1"/>
</dbReference>
<dbReference type="PANTHER" id="PTHR33280:SF6">
    <property type="entry name" value="LARGE RIBOSOMAL SUBUNIT PROTEIN BL31A"/>
    <property type="match status" value="1"/>
</dbReference>
<dbReference type="Pfam" id="PF01197">
    <property type="entry name" value="Ribosomal_L31"/>
    <property type="match status" value="1"/>
</dbReference>
<dbReference type="PRINTS" id="PR01249">
    <property type="entry name" value="RIBOSOMALL31"/>
</dbReference>
<dbReference type="SUPFAM" id="SSF143800">
    <property type="entry name" value="L28p-like"/>
    <property type="match status" value="1"/>
</dbReference>
<dbReference type="PROSITE" id="PS01143">
    <property type="entry name" value="RIBOSOMAL_L31"/>
    <property type="match status" value="1"/>
</dbReference>
<evidence type="ECO:0000255" key="1">
    <source>
        <dbReference type="HAMAP-Rule" id="MF_00501"/>
    </source>
</evidence>
<evidence type="ECO:0000305" key="2"/>
<gene>
    <name evidence="1" type="primary">rpmE</name>
    <name type="ordered locus">SDY_3801</name>
</gene>
<proteinExistence type="inferred from homology"/>
<comment type="function">
    <text evidence="1">Binds the 23S rRNA.</text>
</comment>
<comment type="cofactor">
    <cofactor evidence="1">
        <name>Zn(2+)</name>
        <dbReference type="ChEBI" id="CHEBI:29105"/>
    </cofactor>
    <text evidence="1">Binds 1 zinc ion per subunit.</text>
</comment>
<comment type="subunit">
    <text evidence="1">Part of the 50S ribosomal subunit.</text>
</comment>
<comment type="similarity">
    <text evidence="1">Belongs to the bacterial ribosomal protein bL31 family. Type A subfamily.</text>
</comment>
<name>RL31_SHIDS</name>
<feature type="chain" id="PRO_0000259228" description="Large ribosomal subunit protein bL31">
    <location>
        <begin position="1"/>
        <end position="70"/>
    </location>
</feature>
<feature type="binding site" evidence="1">
    <location>
        <position position="16"/>
    </location>
    <ligand>
        <name>Zn(2+)</name>
        <dbReference type="ChEBI" id="CHEBI:29105"/>
    </ligand>
</feature>
<feature type="binding site" evidence="1">
    <location>
        <position position="18"/>
    </location>
    <ligand>
        <name>Zn(2+)</name>
        <dbReference type="ChEBI" id="CHEBI:29105"/>
    </ligand>
</feature>
<feature type="binding site" evidence="1">
    <location>
        <position position="37"/>
    </location>
    <ligand>
        <name>Zn(2+)</name>
        <dbReference type="ChEBI" id="CHEBI:29105"/>
    </ligand>
</feature>
<feature type="binding site" evidence="1">
    <location>
        <position position="40"/>
    </location>
    <ligand>
        <name>Zn(2+)</name>
        <dbReference type="ChEBI" id="CHEBI:29105"/>
    </ligand>
</feature>
<feature type="modified residue" description="N6-acetyllysine" evidence="1">
    <location>
        <position position="8"/>
    </location>
</feature>
<organism>
    <name type="scientific">Shigella dysenteriae serotype 1 (strain Sd197)</name>
    <dbReference type="NCBI Taxonomy" id="300267"/>
    <lineage>
        <taxon>Bacteria</taxon>
        <taxon>Pseudomonadati</taxon>
        <taxon>Pseudomonadota</taxon>
        <taxon>Gammaproteobacteria</taxon>
        <taxon>Enterobacterales</taxon>
        <taxon>Enterobacteriaceae</taxon>
        <taxon>Shigella</taxon>
    </lineage>
</organism>
<reference key="1">
    <citation type="journal article" date="2005" name="Nucleic Acids Res.">
        <title>Genome dynamics and diversity of Shigella species, the etiologic agents of bacillary dysentery.</title>
        <authorList>
            <person name="Yang F."/>
            <person name="Yang J."/>
            <person name="Zhang X."/>
            <person name="Chen L."/>
            <person name="Jiang Y."/>
            <person name="Yan Y."/>
            <person name="Tang X."/>
            <person name="Wang J."/>
            <person name="Xiong Z."/>
            <person name="Dong J."/>
            <person name="Xue Y."/>
            <person name="Zhu Y."/>
            <person name="Xu X."/>
            <person name="Sun L."/>
            <person name="Chen S."/>
            <person name="Nie H."/>
            <person name="Peng J."/>
            <person name="Xu J."/>
            <person name="Wang Y."/>
            <person name="Yuan Z."/>
            <person name="Wen Y."/>
            <person name="Yao Z."/>
            <person name="Shen Y."/>
            <person name="Qiang B."/>
            <person name="Hou Y."/>
            <person name="Yu J."/>
            <person name="Jin Q."/>
        </authorList>
    </citation>
    <scope>NUCLEOTIDE SEQUENCE [LARGE SCALE GENOMIC DNA]</scope>
    <source>
        <strain>Sd197</strain>
    </source>
</reference>